<dbReference type="EC" id="2.1.1.-" evidence="1"/>
<dbReference type="EMBL" id="AACD01000042">
    <property type="protein sequence ID" value="EAA63985.1"/>
    <property type="status" value="ALT_SEQ"/>
    <property type="molecule type" value="Genomic_DNA"/>
</dbReference>
<dbReference type="EMBL" id="BN001307">
    <property type="protein sequence ID" value="CBF86981.1"/>
    <property type="status" value="ALT_SEQ"/>
    <property type="molecule type" value="Genomic_DNA"/>
</dbReference>
<dbReference type="RefSeq" id="XP_660104.1">
    <property type="nucleotide sequence ID" value="XM_655012.1"/>
</dbReference>
<dbReference type="SMR" id="Q5BAD0"/>
<dbReference type="FunCoup" id="Q5BAD0">
    <property type="interactions" value="130"/>
</dbReference>
<dbReference type="STRING" id="227321.Q5BAD0"/>
<dbReference type="KEGG" id="ani:ANIA_02500"/>
<dbReference type="VEuPathDB" id="FungiDB:AN2500"/>
<dbReference type="eggNOG" id="KOG2920">
    <property type="taxonomic scope" value="Eukaryota"/>
</dbReference>
<dbReference type="HOGENOM" id="CLU_032409_0_0_1"/>
<dbReference type="InParanoid" id="Q5BAD0"/>
<dbReference type="OrthoDB" id="46564at2759"/>
<dbReference type="Proteomes" id="UP000000560">
    <property type="component" value="Chromosome VII"/>
</dbReference>
<dbReference type="GO" id="GO:0005737">
    <property type="term" value="C:cytoplasm"/>
    <property type="evidence" value="ECO:0007669"/>
    <property type="project" value="UniProtKB-SubCell"/>
</dbReference>
<dbReference type="GO" id="GO:0071885">
    <property type="term" value="F:N-terminal protein N-methyltransferase activity"/>
    <property type="evidence" value="ECO:0007669"/>
    <property type="project" value="UniProtKB-UniRule"/>
</dbReference>
<dbReference type="GO" id="GO:0008276">
    <property type="term" value="F:protein methyltransferase activity"/>
    <property type="evidence" value="ECO:0000318"/>
    <property type="project" value="GO_Central"/>
</dbReference>
<dbReference type="GO" id="GO:0016279">
    <property type="term" value="F:protein-lysine N-methyltransferase activity"/>
    <property type="evidence" value="ECO:0007669"/>
    <property type="project" value="UniProtKB-UniRule"/>
</dbReference>
<dbReference type="GO" id="GO:0032259">
    <property type="term" value="P:methylation"/>
    <property type="evidence" value="ECO:0007669"/>
    <property type="project" value="UniProtKB-KW"/>
</dbReference>
<dbReference type="Gene3D" id="3.40.50.150">
    <property type="entry name" value="Vaccinia Virus protein VP39"/>
    <property type="match status" value="1"/>
</dbReference>
<dbReference type="HAMAP" id="MF_03223">
    <property type="entry name" value="Methyltr_EFM7"/>
    <property type="match status" value="1"/>
</dbReference>
<dbReference type="InterPro" id="IPR025784">
    <property type="entry name" value="EFM7"/>
</dbReference>
<dbReference type="InterPro" id="IPR019410">
    <property type="entry name" value="Methyltransf_16"/>
</dbReference>
<dbReference type="InterPro" id="IPR029063">
    <property type="entry name" value="SAM-dependent_MTases_sf"/>
</dbReference>
<dbReference type="PANTHER" id="PTHR14614">
    <property type="entry name" value="HEPATOCELLULAR CARCINOMA-ASSOCIATED ANTIGEN"/>
    <property type="match status" value="1"/>
</dbReference>
<dbReference type="PANTHER" id="PTHR14614:SF10">
    <property type="entry name" value="PROTEIN N-TERMINAL AND LYSINE N-METHYLTRANSFERASE EFM7"/>
    <property type="match status" value="1"/>
</dbReference>
<dbReference type="Pfam" id="PF10294">
    <property type="entry name" value="Methyltransf_16"/>
    <property type="match status" value="1"/>
</dbReference>
<dbReference type="SUPFAM" id="SSF53335">
    <property type="entry name" value="S-adenosyl-L-methionine-dependent methyltransferases"/>
    <property type="match status" value="1"/>
</dbReference>
<dbReference type="PROSITE" id="PS51560">
    <property type="entry name" value="SAM_MT_NNT1"/>
    <property type="match status" value="1"/>
</dbReference>
<reference key="1">
    <citation type="journal article" date="2005" name="Nature">
        <title>Sequencing of Aspergillus nidulans and comparative analysis with A. fumigatus and A. oryzae.</title>
        <authorList>
            <person name="Galagan J.E."/>
            <person name="Calvo S.E."/>
            <person name="Cuomo C."/>
            <person name="Ma L.-J."/>
            <person name="Wortman J.R."/>
            <person name="Batzoglou S."/>
            <person name="Lee S.-I."/>
            <person name="Bastuerkmen M."/>
            <person name="Spevak C.C."/>
            <person name="Clutterbuck J."/>
            <person name="Kapitonov V."/>
            <person name="Jurka J."/>
            <person name="Scazzocchio C."/>
            <person name="Farman M.L."/>
            <person name="Butler J."/>
            <person name="Purcell S."/>
            <person name="Harris S."/>
            <person name="Braus G.H."/>
            <person name="Draht O."/>
            <person name="Busch S."/>
            <person name="D'Enfert C."/>
            <person name="Bouchier C."/>
            <person name="Goldman G.H."/>
            <person name="Bell-Pedersen D."/>
            <person name="Griffiths-Jones S."/>
            <person name="Doonan J.H."/>
            <person name="Yu J."/>
            <person name="Vienken K."/>
            <person name="Pain A."/>
            <person name="Freitag M."/>
            <person name="Selker E.U."/>
            <person name="Archer D.B."/>
            <person name="Penalva M.A."/>
            <person name="Oakley B.R."/>
            <person name="Momany M."/>
            <person name="Tanaka T."/>
            <person name="Kumagai T."/>
            <person name="Asai K."/>
            <person name="Machida M."/>
            <person name="Nierman W.C."/>
            <person name="Denning D.W."/>
            <person name="Caddick M.X."/>
            <person name="Hynes M."/>
            <person name="Paoletti M."/>
            <person name="Fischer R."/>
            <person name="Miller B.L."/>
            <person name="Dyer P.S."/>
            <person name="Sachs M.S."/>
            <person name="Osmani S.A."/>
            <person name="Birren B.W."/>
        </authorList>
    </citation>
    <scope>NUCLEOTIDE SEQUENCE [LARGE SCALE GENOMIC DNA]</scope>
    <source>
        <strain>FGSC A4 / ATCC 38163 / CBS 112.46 / NRRL 194 / M139</strain>
    </source>
</reference>
<reference key="2">
    <citation type="journal article" date="2009" name="Fungal Genet. Biol.">
        <title>The 2008 update of the Aspergillus nidulans genome annotation: a community effort.</title>
        <authorList>
            <person name="Wortman J.R."/>
            <person name="Gilsenan J.M."/>
            <person name="Joardar V."/>
            <person name="Deegan J."/>
            <person name="Clutterbuck J."/>
            <person name="Andersen M.R."/>
            <person name="Archer D."/>
            <person name="Bencina M."/>
            <person name="Braus G."/>
            <person name="Coutinho P."/>
            <person name="von Dohren H."/>
            <person name="Doonan J."/>
            <person name="Driessen A.J."/>
            <person name="Durek P."/>
            <person name="Espeso E."/>
            <person name="Fekete E."/>
            <person name="Flipphi M."/>
            <person name="Estrada C.G."/>
            <person name="Geysens S."/>
            <person name="Goldman G."/>
            <person name="de Groot P.W."/>
            <person name="Hansen K."/>
            <person name="Harris S.D."/>
            <person name="Heinekamp T."/>
            <person name="Helmstaedt K."/>
            <person name="Henrissat B."/>
            <person name="Hofmann G."/>
            <person name="Homan T."/>
            <person name="Horio T."/>
            <person name="Horiuchi H."/>
            <person name="James S."/>
            <person name="Jones M."/>
            <person name="Karaffa L."/>
            <person name="Karanyi Z."/>
            <person name="Kato M."/>
            <person name="Keller N."/>
            <person name="Kelly D.E."/>
            <person name="Kiel J.A."/>
            <person name="Kim J.M."/>
            <person name="van der Klei I.J."/>
            <person name="Klis F.M."/>
            <person name="Kovalchuk A."/>
            <person name="Krasevec N."/>
            <person name="Kubicek C.P."/>
            <person name="Liu B."/>
            <person name="Maccabe A."/>
            <person name="Meyer V."/>
            <person name="Mirabito P."/>
            <person name="Miskei M."/>
            <person name="Mos M."/>
            <person name="Mullins J."/>
            <person name="Nelson D.R."/>
            <person name="Nielsen J."/>
            <person name="Oakley B.R."/>
            <person name="Osmani S.A."/>
            <person name="Pakula T."/>
            <person name="Paszewski A."/>
            <person name="Paulsen I."/>
            <person name="Pilsyk S."/>
            <person name="Pocsi I."/>
            <person name="Punt P.J."/>
            <person name="Ram A.F."/>
            <person name="Ren Q."/>
            <person name="Robellet X."/>
            <person name="Robson G."/>
            <person name="Seiboth B."/>
            <person name="van Solingen P."/>
            <person name="Specht T."/>
            <person name="Sun J."/>
            <person name="Taheri-Talesh N."/>
            <person name="Takeshita N."/>
            <person name="Ussery D."/>
            <person name="vanKuyk P.A."/>
            <person name="Visser H."/>
            <person name="van de Vondervoort P.J."/>
            <person name="de Vries R.P."/>
            <person name="Walton J."/>
            <person name="Xiang X."/>
            <person name="Xiong Y."/>
            <person name="Zeng A.P."/>
            <person name="Brandt B.W."/>
            <person name="Cornell M.J."/>
            <person name="van den Hondel C.A."/>
            <person name="Visser J."/>
            <person name="Oliver S.G."/>
            <person name="Turner G."/>
        </authorList>
    </citation>
    <scope>GENOME REANNOTATION</scope>
    <source>
        <strain>FGSC A4 / ATCC 38163 / CBS 112.46 / NRRL 194 / M139</strain>
    </source>
</reference>
<keyword id="KW-0963">Cytoplasm</keyword>
<keyword id="KW-0489">Methyltransferase</keyword>
<keyword id="KW-1185">Reference proteome</keyword>
<keyword id="KW-0949">S-adenosyl-L-methionine</keyword>
<keyword id="KW-0808">Transferase</keyword>
<name>EFM7_EMENI</name>
<accession>Q5BAD0</accession>
<accession>C8VPH9</accession>
<gene>
    <name evidence="1" type="primary">efm7</name>
    <name type="synonym">nnt1</name>
    <name type="ORF">AN2500</name>
</gene>
<proteinExistence type="inferred from homology"/>
<feature type="chain" id="PRO_0000096895" description="Protein N-terminal and lysine N-methyltransferase efm7">
    <location>
        <begin position="1"/>
        <end position="259"/>
    </location>
</feature>
<feature type="binding site" evidence="1">
    <location>
        <position position="53"/>
    </location>
    <ligand>
        <name>S-adenosyl-L-methionine</name>
        <dbReference type="ChEBI" id="CHEBI:59789"/>
    </ligand>
</feature>
<feature type="binding site" evidence="1">
    <location>
        <begin position="80"/>
        <end position="82"/>
    </location>
    <ligand>
        <name>S-adenosyl-L-methionine</name>
        <dbReference type="ChEBI" id="CHEBI:59789"/>
    </ligand>
</feature>
<feature type="binding site" evidence="1">
    <location>
        <position position="102"/>
    </location>
    <ligand>
        <name>S-adenosyl-L-methionine</name>
        <dbReference type="ChEBI" id="CHEBI:59789"/>
    </ligand>
</feature>
<feature type="binding site" evidence="1">
    <location>
        <position position="138"/>
    </location>
    <ligand>
        <name>S-adenosyl-L-methionine</name>
        <dbReference type="ChEBI" id="CHEBI:59789"/>
    </ligand>
</feature>
<feature type="binding site" evidence="1">
    <location>
        <position position="164"/>
    </location>
    <ligand>
        <name>S-adenosyl-L-methionine</name>
        <dbReference type="ChEBI" id="CHEBI:59789"/>
    </ligand>
</feature>
<organism>
    <name type="scientific">Emericella nidulans (strain FGSC A4 / ATCC 38163 / CBS 112.46 / NRRL 194 / M139)</name>
    <name type="common">Aspergillus nidulans</name>
    <dbReference type="NCBI Taxonomy" id="227321"/>
    <lineage>
        <taxon>Eukaryota</taxon>
        <taxon>Fungi</taxon>
        <taxon>Dikarya</taxon>
        <taxon>Ascomycota</taxon>
        <taxon>Pezizomycotina</taxon>
        <taxon>Eurotiomycetes</taxon>
        <taxon>Eurotiomycetidae</taxon>
        <taxon>Eurotiales</taxon>
        <taxon>Aspergillaceae</taxon>
        <taxon>Aspergillus</taxon>
        <taxon>Aspergillus subgen. Nidulantes</taxon>
    </lineage>
</organism>
<comment type="function">
    <text evidence="1">S-adenosyl-L-methionine-dependent protein methyltransferase that trimethylates the N-terminal glycine 'Gly-2' of elongation factor 1-alpha, before also catalyzing the mono- and dimethylation of 'Lys-3'.</text>
</comment>
<comment type="subcellular location">
    <subcellularLocation>
        <location evidence="1">Cytoplasm</location>
    </subcellularLocation>
</comment>
<comment type="similarity">
    <text evidence="1">Belongs to the class I-like SAM-binding methyltransferase superfamily. EFM7 family.</text>
</comment>
<comment type="sequence caution" evidence="2">
    <conflict type="erroneous gene model prediction">
        <sequence resource="EMBL-CDS" id="CBF86981"/>
    </conflict>
</comment>
<comment type="sequence caution" evidence="2">
    <conflict type="erroneous gene model prediction">
        <sequence resource="EMBL-CDS" id="EAA63985"/>
    </conflict>
</comment>
<sequence length="259" mass="29157">MADDFDTGDMFKDPEGFYPPEKEPTFAEHRMLSGQVVRVRLVGSHPLYGNMLWNAGRISSEYIETHAPTLIAGKDVLEIGAAAGVPSIVSAIMGARTTVMTDYPDPDLVDNMRQNADASASMIPTDPPSSLHVTGYKWGSDVEPLKAYLPEESRADGFDVLIMADVVYSHREHGNLVKTMQETLKRQKDAVALVIFTPYEPWLLPQTERFFPLAEQGGFTVTKVFEKLTEKLLFENDPGDERLRRTVFGYELRWKDELR</sequence>
<protein>
    <recommendedName>
        <fullName evidence="1">Protein N-terminal and lysine N-methyltransferase efm7</fullName>
        <ecNumber evidence="1">2.1.1.-</ecNumber>
    </recommendedName>
    <alternativeName>
        <fullName evidence="1">Elongation factor methyltransferase 7</fullName>
    </alternativeName>
</protein>
<evidence type="ECO:0000255" key="1">
    <source>
        <dbReference type="HAMAP-Rule" id="MF_03223"/>
    </source>
</evidence>
<evidence type="ECO:0000305" key="2"/>